<sequence length="416" mass="45407">MTDMRRLGQRAKQASLLIAPLSTQIKNRFLSTLAKALVDDTQTLLAANQKDLANAKEHGISDIMMDRLRLTSERIKAIAQGVQQVADLADPIGQVIKGYTNLDGLKILQKRVPLGVIAMIFESRPNVSVDAFSLAFKTNNAIILRGGKDALHSNKALVKLIRQSLEKSGITPDAVQLVEDPSHAVAEELMQATDYVDVLIPRGGAKLIQTVKEKAKVPVIETGVGNVHIYVDAQADLDMATNIVINAKTKRPSVCNAAEGLVIHEAVAARFIPMLEKAINQVQPVEWRADDKALPLFEQAVPAKAEDFETEFLDYIMSVKVVSSLEEAISWINQHTSHHSEAIITRDIKAAETFQDLVDAAAVYVNASTRFTDGFVFGLGAEIGISTQKMHARGPMGLEALTSTKFYINGDGHIRE</sequence>
<proteinExistence type="inferred from homology"/>
<name>PROA_STRPB</name>
<protein>
    <recommendedName>
        <fullName evidence="1">Gamma-glutamyl phosphate reductase</fullName>
        <shortName evidence="1">GPR</shortName>
        <ecNumber evidence="1">1.2.1.41</ecNumber>
    </recommendedName>
    <alternativeName>
        <fullName evidence="1">Glutamate-5-semialdehyde dehydrogenase</fullName>
    </alternativeName>
    <alternativeName>
        <fullName evidence="1">Glutamyl-gamma-semialdehyde dehydrogenase</fullName>
        <shortName evidence="1">GSA dehydrogenase</shortName>
    </alternativeName>
</protein>
<feature type="chain" id="PRO_0000252595" description="Gamma-glutamyl phosphate reductase">
    <location>
        <begin position="1"/>
        <end position="416"/>
    </location>
</feature>
<reference key="1">
    <citation type="journal article" date="2006" name="Proc. Natl. Acad. Sci. U.S.A.">
        <title>Molecular genetic anatomy of inter- and intraserotype variation in the human bacterial pathogen group A Streptococcus.</title>
        <authorList>
            <person name="Beres S.B."/>
            <person name="Richter E.W."/>
            <person name="Nagiec M.J."/>
            <person name="Sumby P."/>
            <person name="Porcella S.F."/>
            <person name="DeLeo F.R."/>
            <person name="Musser J.M."/>
        </authorList>
    </citation>
    <scope>NUCLEOTIDE SEQUENCE [LARGE SCALE GENOMIC DNA]</scope>
    <source>
        <strain>MGAS2096</strain>
    </source>
</reference>
<comment type="function">
    <text evidence="1">Catalyzes the NADPH-dependent reduction of L-glutamate 5-phosphate into L-glutamate 5-semialdehyde and phosphate. The product spontaneously undergoes cyclization to form 1-pyrroline-5-carboxylate.</text>
</comment>
<comment type="catalytic activity">
    <reaction evidence="1">
        <text>L-glutamate 5-semialdehyde + phosphate + NADP(+) = L-glutamyl 5-phosphate + NADPH + H(+)</text>
        <dbReference type="Rhea" id="RHEA:19541"/>
        <dbReference type="ChEBI" id="CHEBI:15378"/>
        <dbReference type="ChEBI" id="CHEBI:43474"/>
        <dbReference type="ChEBI" id="CHEBI:57783"/>
        <dbReference type="ChEBI" id="CHEBI:58066"/>
        <dbReference type="ChEBI" id="CHEBI:58274"/>
        <dbReference type="ChEBI" id="CHEBI:58349"/>
        <dbReference type="EC" id="1.2.1.41"/>
    </reaction>
</comment>
<comment type="pathway">
    <text evidence="1">Amino-acid biosynthesis; L-proline biosynthesis; L-glutamate 5-semialdehyde from L-glutamate: step 2/2.</text>
</comment>
<comment type="subcellular location">
    <subcellularLocation>
        <location evidence="1">Cytoplasm</location>
    </subcellularLocation>
</comment>
<comment type="similarity">
    <text evidence="1">Belongs to the gamma-glutamyl phosphate reductase family.</text>
</comment>
<dbReference type="EC" id="1.2.1.41" evidence="1"/>
<dbReference type="EMBL" id="CP000261">
    <property type="protein sequence ID" value="ABF36445.1"/>
    <property type="molecule type" value="Genomic_DNA"/>
</dbReference>
<dbReference type="SMR" id="Q1JAG3"/>
<dbReference type="KEGG" id="spj:MGAS2096_Spy1393"/>
<dbReference type="HOGENOM" id="CLU_030231_0_0_9"/>
<dbReference type="UniPathway" id="UPA00098">
    <property type="reaction ID" value="UER00360"/>
</dbReference>
<dbReference type="GO" id="GO:0005737">
    <property type="term" value="C:cytoplasm"/>
    <property type="evidence" value="ECO:0007669"/>
    <property type="project" value="UniProtKB-SubCell"/>
</dbReference>
<dbReference type="GO" id="GO:0004350">
    <property type="term" value="F:glutamate-5-semialdehyde dehydrogenase activity"/>
    <property type="evidence" value="ECO:0007669"/>
    <property type="project" value="UniProtKB-UniRule"/>
</dbReference>
<dbReference type="GO" id="GO:0050661">
    <property type="term" value="F:NADP binding"/>
    <property type="evidence" value="ECO:0007669"/>
    <property type="project" value="InterPro"/>
</dbReference>
<dbReference type="GO" id="GO:0055129">
    <property type="term" value="P:L-proline biosynthetic process"/>
    <property type="evidence" value="ECO:0007669"/>
    <property type="project" value="UniProtKB-UniRule"/>
</dbReference>
<dbReference type="CDD" id="cd07079">
    <property type="entry name" value="ALDH_F18-19_ProA-GPR"/>
    <property type="match status" value="1"/>
</dbReference>
<dbReference type="FunFam" id="3.40.309.10:FF:000006">
    <property type="entry name" value="Gamma-glutamyl phosphate reductase"/>
    <property type="match status" value="1"/>
</dbReference>
<dbReference type="Gene3D" id="3.40.605.10">
    <property type="entry name" value="Aldehyde Dehydrogenase, Chain A, domain 1"/>
    <property type="match status" value="1"/>
</dbReference>
<dbReference type="Gene3D" id="3.40.309.10">
    <property type="entry name" value="Aldehyde Dehydrogenase, Chain A, domain 2"/>
    <property type="match status" value="1"/>
</dbReference>
<dbReference type="HAMAP" id="MF_00412">
    <property type="entry name" value="ProA"/>
    <property type="match status" value="1"/>
</dbReference>
<dbReference type="InterPro" id="IPR016161">
    <property type="entry name" value="Ald_DH/histidinol_DH"/>
</dbReference>
<dbReference type="InterPro" id="IPR016163">
    <property type="entry name" value="Ald_DH_C"/>
</dbReference>
<dbReference type="InterPro" id="IPR016162">
    <property type="entry name" value="Ald_DH_N"/>
</dbReference>
<dbReference type="InterPro" id="IPR015590">
    <property type="entry name" value="Aldehyde_DH_dom"/>
</dbReference>
<dbReference type="InterPro" id="IPR020593">
    <property type="entry name" value="G-glutamylP_reductase_CS"/>
</dbReference>
<dbReference type="InterPro" id="IPR012134">
    <property type="entry name" value="Glu-5-SA_DH"/>
</dbReference>
<dbReference type="InterPro" id="IPR000965">
    <property type="entry name" value="GPR_dom"/>
</dbReference>
<dbReference type="NCBIfam" id="NF001221">
    <property type="entry name" value="PRK00197.1"/>
    <property type="match status" value="1"/>
</dbReference>
<dbReference type="NCBIfam" id="TIGR00407">
    <property type="entry name" value="proA"/>
    <property type="match status" value="1"/>
</dbReference>
<dbReference type="PANTHER" id="PTHR11063:SF8">
    <property type="entry name" value="DELTA-1-PYRROLINE-5-CARBOXYLATE SYNTHASE"/>
    <property type="match status" value="1"/>
</dbReference>
<dbReference type="PANTHER" id="PTHR11063">
    <property type="entry name" value="GLUTAMATE SEMIALDEHYDE DEHYDROGENASE"/>
    <property type="match status" value="1"/>
</dbReference>
<dbReference type="Pfam" id="PF00171">
    <property type="entry name" value="Aldedh"/>
    <property type="match status" value="2"/>
</dbReference>
<dbReference type="PIRSF" id="PIRSF000151">
    <property type="entry name" value="GPR"/>
    <property type="match status" value="1"/>
</dbReference>
<dbReference type="SUPFAM" id="SSF53720">
    <property type="entry name" value="ALDH-like"/>
    <property type="match status" value="1"/>
</dbReference>
<dbReference type="PROSITE" id="PS01223">
    <property type="entry name" value="PROA"/>
    <property type="match status" value="1"/>
</dbReference>
<gene>
    <name evidence="1" type="primary">proA</name>
    <name type="ordered locus">MGAS2096_Spy1393</name>
</gene>
<organism>
    <name type="scientific">Streptococcus pyogenes serotype M12 (strain MGAS2096)</name>
    <dbReference type="NCBI Taxonomy" id="370553"/>
    <lineage>
        <taxon>Bacteria</taxon>
        <taxon>Bacillati</taxon>
        <taxon>Bacillota</taxon>
        <taxon>Bacilli</taxon>
        <taxon>Lactobacillales</taxon>
        <taxon>Streptococcaceae</taxon>
        <taxon>Streptococcus</taxon>
    </lineage>
</organism>
<keyword id="KW-0028">Amino-acid biosynthesis</keyword>
<keyword id="KW-0963">Cytoplasm</keyword>
<keyword id="KW-0521">NADP</keyword>
<keyword id="KW-0560">Oxidoreductase</keyword>
<keyword id="KW-0641">Proline biosynthesis</keyword>
<evidence type="ECO:0000255" key="1">
    <source>
        <dbReference type="HAMAP-Rule" id="MF_00412"/>
    </source>
</evidence>
<accession>Q1JAG3</accession>